<gene>
    <name evidence="1" type="primary">trmD</name>
    <name type="ordered locus">LBJ_1433</name>
</gene>
<reference key="1">
    <citation type="journal article" date="2006" name="Proc. Natl. Acad. Sci. U.S.A.">
        <title>Genome reduction in Leptospira borgpetersenii reflects limited transmission potential.</title>
        <authorList>
            <person name="Bulach D.M."/>
            <person name="Zuerner R.L."/>
            <person name="Wilson P."/>
            <person name="Seemann T."/>
            <person name="McGrath A."/>
            <person name="Cullen P.A."/>
            <person name="Davis J."/>
            <person name="Johnson M."/>
            <person name="Kuczek E."/>
            <person name="Alt D.P."/>
            <person name="Peterson-Burch B."/>
            <person name="Coppel R.L."/>
            <person name="Rood J.I."/>
            <person name="Davies J.K."/>
            <person name="Adler B."/>
        </authorList>
    </citation>
    <scope>NUCLEOTIDE SEQUENCE [LARGE SCALE GENOMIC DNA]</scope>
    <source>
        <strain>JB197</strain>
    </source>
</reference>
<organism>
    <name type="scientific">Leptospira borgpetersenii serovar Hardjo-bovis (strain JB197)</name>
    <dbReference type="NCBI Taxonomy" id="355277"/>
    <lineage>
        <taxon>Bacteria</taxon>
        <taxon>Pseudomonadati</taxon>
        <taxon>Spirochaetota</taxon>
        <taxon>Spirochaetia</taxon>
        <taxon>Leptospirales</taxon>
        <taxon>Leptospiraceae</taxon>
        <taxon>Leptospira</taxon>
    </lineage>
</organism>
<name>TRMD_LEPBJ</name>
<feature type="chain" id="PRO_1000006491" description="tRNA (guanine-N(1)-)-methyltransferase">
    <location>
        <begin position="1"/>
        <end position="222"/>
    </location>
</feature>
<feature type="binding site" evidence="1">
    <location>
        <position position="111"/>
    </location>
    <ligand>
        <name>S-adenosyl-L-methionine</name>
        <dbReference type="ChEBI" id="CHEBI:59789"/>
    </ligand>
</feature>
<feature type="binding site" evidence="1">
    <location>
        <begin position="131"/>
        <end position="136"/>
    </location>
    <ligand>
        <name>S-adenosyl-L-methionine</name>
        <dbReference type="ChEBI" id="CHEBI:59789"/>
    </ligand>
</feature>
<protein>
    <recommendedName>
        <fullName evidence="1">tRNA (guanine-N(1)-)-methyltransferase</fullName>
        <ecNumber evidence="1">2.1.1.228</ecNumber>
    </recommendedName>
    <alternativeName>
        <fullName evidence="1">M1G-methyltransferase</fullName>
    </alternativeName>
    <alternativeName>
        <fullName evidence="1">tRNA [GM37] methyltransferase</fullName>
    </alternativeName>
</protein>
<dbReference type="EC" id="2.1.1.228" evidence="1"/>
<dbReference type="EMBL" id="CP000350">
    <property type="protein sequence ID" value="ABJ76006.1"/>
    <property type="molecule type" value="Genomic_DNA"/>
</dbReference>
<dbReference type="RefSeq" id="WP_002751207.1">
    <property type="nucleotide sequence ID" value="NC_008510.1"/>
</dbReference>
<dbReference type="SMR" id="Q04SW4"/>
<dbReference type="KEGG" id="lbj:LBJ_1433"/>
<dbReference type="HOGENOM" id="CLU_047363_0_1_12"/>
<dbReference type="Proteomes" id="UP000000656">
    <property type="component" value="Chromosome 1"/>
</dbReference>
<dbReference type="GO" id="GO:0005829">
    <property type="term" value="C:cytosol"/>
    <property type="evidence" value="ECO:0007669"/>
    <property type="project" value="TreeGrafter"/>
</dbReference>
<dbReference type="GO" id="GO:0052906">
    <property type="term" value="F:tRNA (guanine(37)-N1)-methyltransferase activity"/>
    <property type="evidence" value="ECO:0007669"/>
    <property type="project" value="UniProtKB-UniRule"/>
</dbReference>
<dbReference type="GO" id="GO:0002939">
    <property type="term" value="P:tRNA N1-guanine methylation"/>
    <property type="evidence" value="ECO:0007669"/>
    <property type="project" value="TreeGrafter"/>
</dbReference>
<dbReference type="CDD" id="cd18080">
    <property type="entry name" value="TrmD-like"/>
    <property type="match status" value="1"/>
</dbReference>
<dbReference type="Gene3D" id="3.40.1280.10">
    <property type="match status" value="1"/>
</dbReference>
<dbReference type="Gene3D" id="1.10.1270.20">
    <property type="entry name" value="tRNA(m1g37)methyltransferase, domain 2"/>
    <property type="match status" value="1"/>
</dbReference>
<dbReference type="HAMAP" id="MF_00605">
    <property type="entry name" value="TrmD"/>
    <property type="match status" value="1"/>
</dbReference>
<dbReference type="InterPro" id="IPR029028">
    <property type="entry name" value="Alpha/beta_knot_MTases"/>
</dbReference>
<dbReference type="InterPro" id="IPR023148">
    <property type="entry name" value="tRNA_m1G_MeTrfase_C_sf"/>
</dbReference>
<dbReference type="InterPro" id="IPR002649">
    <property type="entry name" value="tRNA_m1G_MeTrfase_TrmD"/>
</dbReference>
<dbReference type="InterPro" id="IPR029026">
    <property type="entry name" value="tRNA_m1G_MTases_N"/>
</dbReference>
<dbReference type="InterPro" id="IPR016009">
    <property type="entry name" value="tRNA_MeTrfase_TRMD/TRM10"/>
</dbReference>
<dbReference type="NCBIfam" id="NF000648">
    <property type="entry name" value="PRK00026.1"/>
    <property type="match status" value="1"/>
</dbReference>
<dbReference type="NCBIfam" id="TIGR00088">
    <property type="entry name" value="trmD"/>
    <property type="match status" value="1"/>
</dbReference>
<dbReference type="PANTHER" id="PTHR46417">
    <property type="entry name" value="TRNA (GUANINE-N(1)-)-METHYLTRANSFERASE"/>
    <property type="match status" value="1"/>
</dbReference>
<dbReference type="PANTHER" id="PTHR46417:SF1">
    <property type="entry name" value="TRNA (GUANINE-N(1)-)-METHYLTRANSFERASE"/>
    <property type="match status" value="1"/>
</dbReference>
<dbReference type="Pfam" id="PF01746">
    <property type="entry name" value="tRNA_m1G_MT"/>
    <property type="match status" value="1"/>
</dbReference>
<dbReference type="PIRSF" id="PIRSF000386">
    <property type="entry name" value="tRNA_mtase"/>
    <property type="match status" value="1"/>
</dbReference>
<dbReference type="SUPFAM" id="SSF75217">
    <property type="entry name" value="alpha/beta knot"/>
    <property type="match status" value="1"/>
</dbReference>
<keyword id="KW-0963">Cytoplasm</keyword>
<keyword id="KW-0489">Methyltransferase</keyword>
<keyword id="KW-0949">S-adenosyl-L-methionine</keyword>
<keyword id="KW-0808">Transferase</keyword>
<keyword id="KW-0819">tRNA processing</keyword>
<sequence>MKFNFITLFPEKIQSYFSEGLQQKAIESGIFSINTIQLRDFSGNKHNRVDDTIYGGGPGMLLRVEPIHKALLSLGENKGIVILTSPSGIPFHQGIANKLKETGKPLTFISGYYEGVDHRVAEHLVDMEMSLGNYVISAGDLASICIADAVSRLLPGFLGAGESLLDESHNYPDVLEYPQFTKPSEYNGWKVPEVLLSGNHASILAWREQNRKKIDPDQERKL</sequence>
<proteinExistence type="inferred from homology"/>
<accession>Q04SW4</accession>
<evidence type="ECO:0000255" key="1">
    <source>
        <dbReference type="HAMAP-Rule" id="MF_00605"/>
    </source>
</evidence>
<comment type="function">
    <text evidence="1">Specifically methylates guanosine-37 in various tRNAs.</text>
</comment>
<comment type="catalytic activity">
    <reaction evidence="1">
        <text>guanosine(37) in tRNA + S-adenosyl-L-methionine = N(1)-methylguanosine(37) in tRNA + S-adenosyl-L-homocysteine + H(+)</text>
        <dbReference type="Rhea" id="RHEA:36899"/>
        <dbReference type="Rhea" id="RHEA-COMP:10145"/>
        <dbReference type="Rhea" id="RHEA-COMP:10147"/>
        <dbReference type="ChEBI" id="CHEBI:15378"/>
        <dbReference type="ChEBI" id="CHEBI:57856"/>
        <dbReference type="ChEBI" id="CHEBI:59789"/>
        <dbReference type="ChEBI" id="CHEBI:73542"/>
        <dbReference type="ChEBI" id="CHEBI:74269"/>
        <dbReference type="EC" id="2.1.1.228"/>
    </reaction>
</comment>
<comment type="subunit">
    <text evidence="1">Homodimer.</text>
</comment>
<comment type="subcellular location">
    <subcellularLocation>
        <location evidence="1">Cytoplasm</location>
    </subcellularLocation>
</comment>
<comment type="similarity">
    <text evidence="1">Belongs to the RNA methyltransferase TrmD family.</text>
</comment>